<comment type="catalytic activity">
    <reaction evidence="1">
        <text>1-(2-carboxyphenylamino)-1-deoxy-D-ribulose 5-phosphate + H(+) = (1S,2R)-1-C-(indol-3-yl)glycerol 3-phosphate + CO2 + H2O</text>
        <dbReference type="Rhea" id="RHEA:23476"/>
        <dbReference type="ChEBI" id="CHEBI:15377"/>
        <dbReference type="ChEBI" id="CHEBI:15378"/>
        <dbReference type="ChEBI" id="CHEBI:16526"/>
        <dbReference type="ChEBI" id="CHEBI:58613"/>
        <dbReference type="ChEBI" id="CHEBI:58866"/>
        <dbReference type="EC" id="4.1.1.48"/>
    </reaction>
</comment>
<comment type="pathway">
    <text evidence="1">Amino-acid biosynthesis; L-tryptophan biosynthesis; L-tryptophan from chorismate: step 4/5.</text>
</comment>
<comment type="similarity">
    <text evidence="1">Belongs to the TrpC family.</text>
</comment>
<keyword id="KW-0028">Amino-acid biosynthesis</keyword>
<keyword id="KW-0057">Aromatic amino acid biosynthesis</keyword>
<keyword id="KW-0210">Decarboxylase</keyword>
<keyword id="KW-0456">Lyase</keyword>
<keyword id="KW-0822">Tryptophan biosynthesis</keyword>
<feature type="chain" id="PRO_1000198782" description="Indole-3-glycerol phosphate synthase">
    <location>
        <begin position="1"/>
        <end position="278"/>
    </location>
</feature>
<reference key="1">
    <citation type="journal article" date="2009" name="Genome Res.">
        <title>Newly introduced genomic prophage islands are critical determinants of in vivo competitiveness in the Liverpool epidemic strain of Pseudomonas aeruginosa.</title>
        <authorList>
            <person name="Winstanley C."/>
            <person name="Langille M.G.I."/>
            <person name="Fothergill J.L."/>
            <person name="Kukavica-Ibrulj I."/>
            <person name="Paradis-Bleau C."/>
            <person name="Sanschagrin F."/>
            <person name="Thomson N.R."/>
            <person name="Winsor G.L."/>
            <person name="Quail M.A."/>
            <person name="Lennard N."/>
            <person name="Bignell A."/>
            <person name="Clarke L."/>
            <person name="Seeger K."/>
            <person name="Saunders D."/>
            <person name="Harris D."/>
            <person name="Parkhill J."/>
            <person name="Hancock R.E.W."/>
            <person name="Brinkman F.S.L."/>
            <person name="Levesque R.C."/>
        </authorList>
    </citation>
    <scope>NUCLEOTIDE SEQUENCE [LARGE SCALE GENOMIC DNA]</scope>
    <source>
        <strain>LESB58</strain>
    </source>
</reference>
<sequence>MSVPTVLQKILARKAEEVAERRARVNLAEVERLARSADAPRGFANALLERAKRKEPAVIAEIKKASPSKGVLREHFVPAEIARSYEAGGAACLSVLTDVDFFQGADAYLKEARAACALPVIRKDFMIDPYQIVEARAIGADCILLIVSALDDVLMAELAATAKSVGLDVLVEVHDGTELERALKTLDTPLVGINNRNLHTFEVSLETTLDLLPEIPRDRLVVTESGILNRADVELMEVSEVYAFLVGEAFMRADDPGLELKRLFFQERGGVVLGADPD</sequence>
<gene>
    <name evidence="1" type="primary">trpC</name>
    <name type="ordered locus">PLES_06301</name>
</gene>
<organism>
    <name type="scientific">Pseudomonas aeruginosa (strain LESB58)</name>
    <dbReference type="NCBI Taxonomy" id="557722"/>
    <lineage>
        <taxon>Bacteria</taxon>
        <taxon>Pseudomonadati</taxon>
        <taxon>Pseudomonadota</taxon>
        <taxon>Gammaproteobacteria</taxon>
        <taxon>Pseudomonadales</taxon>
        <taxon>Pseudomonadaceae</taxon>
        <taxon>Pseudomonas</taxon>
    </lineage>
</organism>
<proteinExistence type="inferred from homology"/>
<protein>
    <recommendedName>
        <fullName evidence="1">Indole-3-glycerol phosphate synthase</fullName>
        <shortName evidence="1">IGPS</shortName>
        <ecNumber evidence="1">4.1.1.48</ecNumber>
    </recommendedName>
</protein>
<name>TRPC_PSEA8</name>
<evidence type="ECO:0000255" key="1">
    <source>
        <dbReference type="HAMAP-Rule" id="MF_00134"/>
    </source>
</evidence>
<dbReference type="EC" id="4.1.1.48" evidence="1"/>
<dbReference type="EMBL" id="FM209186">
    <property type="protein sequence ID" value="CAW25357.1"/>
    <property type="molecule type" value="Genomic_DNA"/>
</dbReference>
<dbReference type="RefSeq" id="WP_003085205.1">
    <property type="nucleotide sequence ID" value="NC_011770.1"/>
</dbReference>
<dbReference type="SMR" id="B7V609"/>
<dbReference type="KEGG" id="pag:PLES_06301"/>
<dbReference type="HOGENOM" id="CLU_034247_2_0_6"/>
<dbReference type="UniPathway" id="UPA00035">
    <property type="reaction ID" value="UER00043"/>
</dbReference>
<dbReference type="GO" id="GO:0004425">
    <property type="term" value="F:indole-3-glycerol-phosphate synthase activity"/>
    <property type="evidence" value="ECO:0007669"/>
    <property type="project" value="UniProtKB-UniRule"/>
</dbReference>
<dbReference type="GO" id="GO:0004640">
    <property type="term" value="F:phosphoribosylanthranilate isomerase activity"/>
    <property type="evidence" value="ECO:0007669"/>
    <property type="project" value="TreeGrafter"/>
</dbReference>
<dbReference type="GO" id="GO:0000162">
    <property type="term" value="P:L-tryptophan biosynthetic process"/>
    <property type="evidence" value="ECO:0007669"/>
    <property type="project" value="UniProtKB-UniRule"/>
</dbReference>
<dbReference type="CDD" id="cd00331">
    <property type="entry name" value="IGPS"/>
    <property type="match status" value="1"/>
</dbReference>
<dbReference type="FunFam" id="3.20.20.70:FF:000024">
    <property type="entry name" value="Indole-3-glycerol phosphate synthase"/>
    <property type="match status" value="1"/>
</dbReference>
<dbReference type="Gene3D" id="3.20.20.70">
    <property type="entry name" value="Aldolase class I"/>
    <property type="match status" value="1"/>
</dbReference>
<dbReference type="HAMAP" id="MF_00134_B">
    <property type="entry name" value="IGPS_B"/>
    <property type="match status" value="1"/>
</dbReference>
<dbReference type="InterPro" id="IPR013785">
    <property type="entry name" value="Aldolase_TIM"/>
</dbReference>
<dbReference type="InterPro" id="IPR045186">
    <property type="entry name" value="Indole-3-glycerol_P_synth"/>
</dbReference>
<dbReference type="InterPro" id="IPR013798">
    <property type="entry name" value="Indole-3-glycerol_P_synth_dom"/>
</dbReference>
<dbReference type="InterPro" id="IPR001468">
    <property type="entry name" value="Indole-3-GlycerolPSynthase_CS"/>
</dbReference>
<dbReference type="InterPro" id="IPR011060">
    <property type="entry name" value="RibuloseP-bd_barrel"/>
</dbReference>
<dbReference type="NCBIfam" id="NF001370">
    <property type="entry name" value="PRK00278.1-2"/>
    <property type="match status" value="1"/>
</dbReference>
<dbReference type="NCBIfam" id="NF001373">
    <property type="entry name" value="PRK00278.1-6"/>
    <property type="match status" value="1"/>
</dbReference>
<dbReference type="NCBIfam" id="NF001377">
    <property type="entry name" value="PRK00278.2-4"/>
    <property type="match status" value="1"/>
</dbReference>
<dbReference type="PANTHER" id="PTHR22854:SF2">
    <property type="entry name" value="INDOLE-3-GLYCEROL-PHOSPHATE SYNTHASE"/>
    <property type="match status" value="1"/>
</dbReference>
<dbReference type="PANTHER" id="PTHR22854">
    <property type="entry name" value="TRYPTOPHAN BIOSYNTHESIS PROTEIN"/>
    <property type="match status" value="1"/>
</dbReference>
<dbReference type="Pfam" id="PF00218">
    <property type="entry name" value="IGPS"/>
    <property type="match status" value="1"/>
</dbReference>
<dbReference type="SUPFAM" id="SSF51366">
    <property type="entry name" value="Ribulose-phoshate binding barrel"/>
    <property type="match status" value="1"/>
</dbReference>
<dbReference type="PROSITE" id="PS00614">
    <property type="entry name" value="IGPS"/>
    <property type="match status" value="1"/>
</dbReference>
<accession>B7V609</accession>